<gene>
    <name type="primary">sptssb</name>
    <name type="synonym">admp</name>
    <name type="synonym">sssptb</name>
</gene>
<proteinExistence type="inferred from homology"/>
<organism>
    <name type="scientific">Xenopus laevis</name>
    <name type="common">African clawed frog</name>
    <dbReference type="NCBI Taxonomy" id="8355"/>
    <lineage>
        <taxon>Eukaryota</taxon>
        <taxon>Metazoa</taxon>
        <taxon>Chordata</taxon>
        <taxon>Craniata</taxon>
        <taxon>Vertebrata</taxon>
        <taxon>Euteleostomi</taxon>
        <taxon>Amphibia</taxon>
        <taxon>Batrachia</taxon>
        <taxon>Anura</taxon>
        <taxon>Pipoidea</taxon>
        <taxon>Pipidae</taxon>
        <taxon>Xenopodinae</taxon>
        <taxon>Xenopus</taxon>
        <taxon>Xenopus</taxon>
    </lineage>
</organism>
<keyword id="KW-0256">Endoplasmic reticulum</keyword>
<keyword id="KW-0443">Lipid metabolism</keyword>
<keyword id="KW-0472">Membrane</keyword>
<keyword id="KW-1185">Reference proteome</keyword>
<keyword id="KW-0746">Sphingolipid metabolism</keyword>
<keyword id="KW-0812">Transmembrane</keyword>
<keyword id="KW-1133">Transmembrane helix</keyword>
<sequence length="80" mass="9471">MDVKHIKDYLSWLYYQYLLITCSYVLEPWEQSIFNTLLLTIIAMVIYSSYIFIPIHVRLAVEFFSRIFGGQHESTVALMS</sequence>
<reference key="1">
    <citation type="submission" date="2004-08" db="EMBL/GenBank/DDBJ databases">
        <authorList>
            <consortium name="NIH - Xenopus Gene Collection (XGC) project"/>
        </authorList>
    </citation>
    <scope>NUCLEOTIDE SEQUENCE [LARGE SCALE MRNA]</scope>
    <source>
        <tissue>Oocyte</tissue>
    </source>
</reference>
<dbReference type="EMBL" id="BC081119">
    <property type="protein sequence ID" value="AAH81119.1"/>
    <property type="molecule type" value="mRNA"/>
</dbReference>
<dbReference type="RefSeq" id="NP_001087706.1">
    <property type="nucleotide sequence ID" value="NM_001094237.1"/>
</dbReference>
<dbReference type="SMR" id="Q66J05"/>
<dbReference type="DNASU" id="447530"/>
<dbReference type="GeneID" id="447530"/>
<dbReference type="KEGG" id="xla:447530"/>
<dbReference type="AGR" id="Xenbase:XB-GENE-6078037"/>
<dbReference type="CTD" id="447530"/>
<dbReference type="Xenbase" id="XB-GENE-6078037">
    <property type="gene designation" value="sptssb.L"/>
</dbReference>
<dbReference type="OrthoDB" id="202672at2759"/>
<dbReference type="UniPathway" id="UPA00222"/>
<dbReference type="Proteomes" id="UP000186698">
    <property type="component" value="Chromosome 5L"/>
</dbReference>
<dbReference type="Bgee" id="447530">
    <property type="expression patterns" value="Expressed in egg cell and 11 other cell types or tissues"/>
</dbReference>
<dbReference type="GO" id="GO:0005789">
    <property type="term" value="C:endoplasmic reticulum membrane"/>
    <property type="evidence" value="ECO:0007669"/>
    <property type="project" value="UniProtKB-SubCell"/>
</dbReference>
<dbReference type="GO" id="GO:0017059">
    <property type="term" value="C:serine palmitoyltransferase complex"/>
    <property type="evidence" value="ECO:0000250"/>
    <property type="project" value="UniProtKB"/>
</dbReference>
<dbReference type="GO" id="GO:0004758">
    <property type="term" value="F:serine C-palmitoyltransferase activity"/>
    <property type="evidence" value="ECO:0007669"/>
    <property type="project" value="TreeGrafter"/>
</dbReference>
<dbReference type="GO" id="GO:0046513">
    <property type="term" value="P:ceramide biosynthetic process"/>
    <property type="evidence" value="ECO:0000250"/>
    <property type="project" value="UniProtKB"/>
</dbReference>
<dbReference type="GO" id="GO:0007029">
    <property type="term" value="P:endoplasmic reticulum organization"/>
    <property type="evidence" value="ECO:0000250"/>
    <property type="project" value="UniProtKB"/>
</dbReference>
<dbReference type="GO" id="GO:0030148">
    <property type="term" value="P:sphingolipid biosynthetic process"/>
    <property type="evidence" value="ECO:0000250"/>
    <property type="project" value="UniProtKB"/>
</dbReference>
<dbReference type="InterPro" id="IPR024512">
    <property type="entry name" value="Ser_palmitoyltrfase_ssu-like"/>
</dbReference>
<dbReference type="PANTHER" id="PTHR28612">
    <property type="entry name" value="SERINE PALMITOYLTRANSFERASE SMALL SUBUNIT B"/>
    <property type="match status" value="1"/>
</dbReference>
<dbReference type="PANTHER" id="PTHR28612:SF1">
    <property type="entry name" value="SERINE PALMITOYLTRANSFERASE SMALL SUBUNIT B"/>
    <property type="match status" value="1"/>
</dbReference>
<dbReference type="Pfam" id="PF11779">
    <property type="entry name" value="SPT_ssu-like"/>
    <property type="match status" value="1"/>
</dbReference>
<feature type="chain" id="PRO_0000378918" description="Serine palmitoyltransferase small subunit B">
    <location>
        <begin position="1"/>
        <end position="80"/>
    </location>
</feature>
<feature type="topological domain" description="Cytoplasmic" evidence="3">
    <location>
        <begin position="1"/>
        <end position="11"/>
    </location>
</feature>
<feature type="transmembrane region" description="Helical" evidence="3">
    <location>
        <begin position="12"/>
        <end position="29"/>
    </location>
</feature>
<feature type="topological domain" description="Lumenal" evidence="3">
    <location>
        <begin position="30"/>
        <end position="36"/>
    </location>
</feature>
<feature type="transmembrane region" description="Helical" evidence="3">
    <location>
        <begin position="37"/>
        <end position="57"/>
    </location>
</feature>
<feature type="topological domain" description="Cytoplasmic" evidence="3">
    <location>
        <begin position="58"/>
        <end position="80"/>
    </location>
</feature>
<accession>Q66J05</accession>
<name>SPTSB_XENLA</name>
<evidence type="ECO:0000250" key="1">
    <source>
        <dbReference type="UniProtKB" id="Q8NFR3"/>
    </source>
</evidence>
<evidence type="ECO:0000250" key="2">
    <source>
        <dbReference type="UniProtKB" id="Q969W0"/>
    </source>
</evidence>
<evidence type="ECO:0000255" key="3"/>
<evidence type="ECO:0000305" key="4"/>
<comment type="function">
    <text evidence="1">Component of the serine palmitoyltransferase multisubunit enzyme (SPT) that catalyzes the initial and rate-limiting step in sphingolipid biosynthesis by condensing L-serine and activated acyl-CoA (most commonly palmitoyl-CoA) to form long-chain bases. The SPT complex is composed of SPTLC1, SPTLC2 or SPTLC3 and SPTSSA or SPTSSB. Within this complex, the heterodimer consisting of SPTLC1 and SPTLC2/SPTLC3 forms the catalytic core. Within the SPT complex, SPTSSB stimulates the catalytic activity and plays a role in substrate specificity. SPT complexes with this subunit showing a preference for longer acyl-CoAs. The SPTLC1-SPTLC2-SPTSSB complex shows a strong preference for C18-CoA substrate, while the SPTLC1-SPTLC3-SPTSSB isozyme displays an ability to use a broader range of acyl-CoAs, without apparent preference.</text>
</comment>
<comment type="pathway">
    <text>Lipid metabolism; sphingolipid metabolism.</text>
</comment>
<comment type="subunit">
    <text evidence="1 2">Component of the serine palmitoyltransferase (SPT) complex, which is composed of SPTLC1, SPTLC2 or SPTLC3 and SPTSSA or SPTSSB. The heterodimer consisting of SPTLC1 and SPTLC2/SPTLC3 forms the catalytic core of the enzyme, while SPTSSA or SPTSSB subunits determine substrate specificity (By similarity). SPT also interacts with ORMDL proteins, especially ORMDL3, which negatively regulate SPT activity in the presence of ceramides (By similarity).</text>
</comment>
<comment type="subcellular location">
    <subcellularLocation>
        <location evidence="4">Endoplasmic reticulum membrane</location>
        <topology evidence="4">Multi-pass membrane protein</topology>
    </subcellularLocation>
</comment>
<comment type="similarity">
    <text evidence="4">Belongs to the SPTSS family. SPTSSB subfamily.</text>
</comment>
<protein>
    <recommendedName>
        <fullName>Serine palmitoyltransferase small subunit B</fullName>
    </recommendedName>
    <alternativeName>
        <fullName>Protein ADMP</fullName>
    </alternativeName>
    <alternativeName>
        <fullName>Small subunit of serine palmitoyltransferase B</fullName>
        <shortName>ssSPTb</shortName>
    </alternativeName>
</protein>